<accession>B4SCS6</accession>
<comment type="function">
    <text evidence="1">Allows the formation of correctly charged Gln-tRNA(Gln) through the transamidation of misacylated Glu-tRNA(Gln) in organisms which lack glutaminyl-tRNA synthetase. The reaction takes place in the presence of glutamine and ATP through an activated gamma-phospho-Glu-tRNA(Gln).</text>
</comment>
<comment type="catalytic activity">
    <reaction evidence="1">
        <text>L-glutamyl-tRNA(Gln) + L-glutamine + ATP + H2O = L-glutaminyl-tRNA(Gln) + L-glutamate + ADP + phosphate + H(+)</text>
        <dbReference type="Rhea" id="RHEA:17521"/>
        <dbReference type="Rhea" id="RHEA-COMP:9681"/>
        <dbReference type="Rhea" id="RHEA-COMP:9684"/>
        <dbReference type="ChEBI" id="CHEBI:15377"/>
        <dbReference type="ChEBI" id="CHEBI:15378"/>
        <dbReference type="ChEBI" id="CHEBI:29985"/>
        <dbReference type="ChEBI" id="CHEBI:30616"/>
        <dbReference type="ChEBI" id="CHEBI:43474"/>
        <dbReference type="ChEBI" id="CHEBI:58359"/>
        <dbReference type="ChEBI" id="CHEBI:78520"/>
        <dbReference type="ChEBI" id="CHEBI:78521"/>
        <dbReference type="ChEBI" id="CHEBI:456216"/>
        <dbReference type="EC" id="6.3.5.7"/>
    </reaction>
</comment>
<comment type="subunit">
    <text evidence="1">Heterotrimer of A, B and C subunits.</text>
</comment>
<comment type="similarity">
    <text evidence="1">Belongs to the amidase family. GatA subfamily.</text>
</comment>
<gene>
    <name evidence="1" type="primary">gatA</name>
    <name type="ordered locus">Ppha_0434</name>
</gene>
<organism>
    <name type="scientific">Pelodictyon phaeoclathratiforme (strain DSM 5477 / BU-1)</name>
    <dbReference type="NCBI Taxonomy" id="324925"/>
    <lineage>
        <taxon>Bacteria</taxon>
        <taxon>Pseudomonadati</taxon>
        <taxon>Chlorobiota</taxon>
        <taxon>Chlorobiia</taxon>
        <taxon>Chlorobiales</taxon>
        <taxon>Chlorobiaceae</taxon>
        <taxon>Chlorobium/Pelodictyon group</taxon>
        <taxon>Pelodictyon</taxon>
    </lineage>
</organism>
<keyword id="KW-0067">ATP-binding</keyword>
<keyword id="KW-0436">Ligase</keyword>
<keyword id="KW-0547">Nucleotide-binding</keyword>
<keyword id="KW-0648">Protein biosynthesis</keyword>
<keyword id="KW-1185">Reference proteome</keyword>
<feature type="chain" id="PRO_1000095158" description="Glutamyl-tRNA(Gln) amidotransferase subunit A">
    <location>
        <begin position="1"/>
        <end position="475"/>
    </location>
</feature>
<feature type="active site" description="Charge relay system" evidence="1">
    <location>
        <position position="76"/>
    </location>
</feature>
<feature type="active site" description="Charge relay system" evidence="1">
    <location>
        <position position="151"/>
    </location>
</feature>
<feature type="active site" description="Acyl-ester intermediate" evidence="1">
    <location>
        <position position="175"/>
    </location>
</feature>
<protein>
    <recommendedName>
        <fullName evidence="1">Glutamyl-tRNA(Gln) amidotransferase subunit A</fullName>
        <shortName evidence="1">Glu-ADT subunit A</shortName>
        <ecNumber evidence="1">6.3.5.7</ecNumber>
    </recommendedName>
</protein>
<reference key="1">
    <citation type="submission" date="2008-06" db="EMBL/GenBank/DDBJ databases">
        <title>Complete sequence of Pelodictyon phaeoclathratiforme BU-1.</title>
        <authorList>
            <consortium name="US DOE Joint Genome Institute"/>
            <person name="Lucas S."/>
            <person name="Copeland A."/>
            <person name="Lapidus A."/>
            <person name="Glavina del Rio T."/>
            <person name="Dalin E."/>
            <person name="Tice H."/>
            <person name="Bruce D."/>
            <person name="Goodwin L."/>
            <person name="Pitluck S."/>
            <person name="Schmutz J."/>
            <person name="Larimer F."/>
            <person name="Land M."/>
            <person name="Hauser L."/>
            <person name="Kyrpides N."/>
            <person name="Mikhailova N."/>
            <person name="Liu Z."/>
            <person name="Li T."/>
            <person name="Zhao F."/>
            <person name="Overmann J."/>
            <person name="Bryant D.A."/>
            <person name="Richardson P."/>
        </authorList>
    </citation>
    <scope>NUCLEOTIDE SEQUENCE [LARGE SCALE GENOMIC DNA]</scope>
    <source>
        <strain>DSM 5477 / BU-1</strain>
    </source>
</reference>
<dbReference type="EC" id="6.3.5.7" evidence="1"/>
<dbReference type="EMBL" id="CP001110">
    <property type="protein sequence ID" value="ACF42760.1"/>
    <property type="molecule type" value="Genomic_DNA"/>
</dbReference>
<dbReference type="RefSeq" id="WP_012507255.1">
    <property type="nucleotide sequence ID" value="NC_011060.1"/>
</dbReference>
<dbReference type="SMR" id="B4SCS6"/>
<dbReference type="STRING" id="324925.Ppha_0434"/>
<dbReference type="KEGG" id="pph:Ppha_0434"/>
<dbReference type="eggNOG" id="COG0154">
    <property type="taxonomic scope" value="Bacteria"/>
</dbReference>
<dbReference type="HOGENOM" id="CLU_009600_0_3_10"/>
<dbReference type="OrthoDB" id="9811471at2"/>
<dbReference type="Proteomes" id="UP000002724">
    <property type="component" value="Chromosome"/>
</dbReference>
<dbReference type="GO" id="GO:0030956">
    <property type="term" value="C:glutamyl-tRNA(Gln) amidotransferase complex"/>
    <property type="evidence" value="ECO:0007669"/>
    <property type="project" value="InterPro"/>
</dbReference>
<dbReference type="GO" id="GO:0005524">
    <property type="term" value="F:ATP binding"/>
    <property type="evidence" value="ECO:0007669"/>
    <property type="project" value="UniProtKB-KW"/>
</dbReference>
<dbReference type="GO" id="GO:0050567">
    <property type="term" value="F:glutaminyl-tRNA synthase (glutamine-hydrolyzing) activity"/>
    <property type="evidence" value="ECO:0007669"/>
    <property type="project" value="UniProtKB-UniRule"/>
</dbReference>
<dbReference type="GO" id="GO:0006412">
    <property type="term" value="P:translation"/>
    <property type="evidence" value="ECO:0007669"/>
    <property type="project" value="UniProtKB-UniRule"/>
</dbReference>
<dbReference type="Gene3D" id="3.90.1300.10">
    <property type="entry name" value="Amidase signature (AS) domain"/>
    <property type="match status" value="1"/>
</dbReference>
<dbReference type="HAMAP" id="MF_00120">
    <property type="entry name" value="GatA"/>
    <property type="match status" value="1"/>
</dbReference>
<dbReference type="InterPro" id="IPR000120">
    <property type="entry name" value="Amidase"/>
</dbReference>
<dbReference type="InterPro" id="IPR020556">
    <property type="entry name" value="Amidase_CS"/>
</dbReference>
<dbReference type="InterPro" id="IPR023631">
    <property type="entry name" value="Amidase_dom"/>
</dbReference>
<dbReference type="InterPro" id="IPR036928">
    <property type="entry name" value="AS_sf"/>
</dbReference>
<dbReference type="InterPro" id="IPR004412">
    <property type="entry name" value="GatA"/>
</dbReference>
<dbReference type="NCBIfam" id="TIGR00132">
    <property type="entry name" value="gatA"/>
    <property type="match status" value="1"/>
</dbReference>
<dbReference type="PANTHER" id="PTHR11895:SF151">
    <property type="entry name" value="GLUTAMYL-TRNA(GLN) AMIDOTRANSFERASE SUBUNIT A"/>
    <property type="match status" value="1"/>
</dbReference>
<dbReference type="PANTHER" id="PTHR11895">
    <property type="entry name" value="TRANSAMIDASE"/>
    <property type="match status" value="1"/>
</dbReference>
<dbReference type="Pfam" id="PF01425">
    <property type="entry name" value="Amidase"/>
    <property type="match status" value="1"/>
</dbReference>
<dbReference type="SUPFAM" id="SSF75304">
    <property type="entry name" value="Amidase signature (AS) enzymes"/>
    <property type="match status" value="1"/>
</dbReference>
<dbReference type="PROSITE" id="PS00571">
    <property type="entry name" value="AMIDASES"/>
    <property type="match status" value="1"/>
</dbReference>
<sequence>MQFSSYEDLRSRLVSHAITCEEVVRFYLERIENHRGDNIYITVFHDQALERARTLDRKLREGGNPGKLFGMPMAIKDNIAMKNCRLTCASKILENYESVYDATAVLRLEEADAIFLGKTNMDEFAMGSSNENSAFGNVPNPFDKTRVPGGSSGGSAAAVANGLALVALGSDTGGSVRQPAGFCDIVGLKPTYGRISRYGLVAFASSFDQIGVLGLNCDDVALVLGVMAGKDEGDATSSRHPVADYASEMATLSVDGLKIGVPKEYFPETLNPEVSRMVKGKLEELRAQGAELVPVTLPDSAYAIAAYYILVTAEASSNLARFDGARYGYRSEMSEDLAAMYVNSRTEGFGREVKRRIMLGTYVLSAGYYDTYYKKAQQVRRVFQDRYREALDKVDVIAGPTSPFPPFGIGDKTENPLEMYLADVFTVPASIVGMPAISVPLGFDSMNLPVGMHLICNFFEEGKLLGIARHMQRSL</sequence>
<evidence type="ECO:0000255" key="1">
    <source>
        <dbReference type="HAMAP-Rule" id="MF_00120"/>
    </source>
</evidence>
<name>GATA_PELPB</name>
<proteinExistence type="inferred from homology"/>